<name>RL1_LEPBP</name>
<reference key="1">
    <citation type="journal article" date="2008" name="PLoS ONE">
        <title>Genome sequence of the saprophyte Leptospira biflexa provides insights into the evolution of Leptospira and the pathogenesis of leptospirosis.</title>
        <authorList>
            <person name="Picardeau M."/>
            <person name="Bulach D.M."/>
            <person name="Bouchier C."/>
            <person name="Zuerner R.L."/>
            <person name="Zidane N."/>
            <person name="Wilson P.J."/>
            <person name="Creno S."/>
            <person name="Kuczek E.S."/>
            <person name="Bommezzadri S."/>
            <person name="Davis J.C."/>
            <person name="McGrath A."/>
            <person name="Johnson M.J."/>
            <person name="Boursaux-Eude C."/>
            <person name="Seemann T."/>
            <person name="Rouy Z."/>
            <person name="Coppel R.L."/>
            <person name="Rood J.I."/>
            <person name="Lajus A."/>
            <person name="Davies J.K."/>
            <person name="Medigue C."/>
            <person name="Adler B."/>
        </authorList>
    </citation>
    <scope>NUCLEOTIDE SEQUENCE [LARGE SCALE GENOMIC DNA]</scope>
    <source>
        <strain>Patoc 1 / ATCC 23582 / Paris</strain>
    </source>
</reference>
<protein>
    <recommendedName>
        <fullName evidence="1">Large ribosomal subunit protein uL1</fullName>
    </recommendedName>
    <alternativeName>
        <fullName evidence="2">50S ribosomal protein L1</fullName>
    </alternativeName>
</protein>
<sequence>MKRGKKYIQLKEKVDRTKAYTLGEAVGLAKATSYSKFDGTLEISTKINYKSLQNVRGTISLPHGTGKTIKVLVFCKGDKQNEAREAGADFVGDMDLIEKVSGGWTDFDACVATPDMMKEVGKLGPVLGRKGLMPKPKAGTVTTDVSKAVKELKAGRIEYRPDKGGVVHLGVGKCSFSDDKLSDNINAVVAALMKDKPSDAKGDYLKSFSVAATMGIGVKVDVKELVNANI</sequence>
<feature type="chain" id="PRO_1000141422" description="Large ribosomal subunit protein uL1">
    <location>
        <begin position="1"/>
        <end position="230"/>
    </location>
</feature>
<gene>
    <name evidence="1" type="primary">rplA</name>
    <name type="ordered locus">LEPBI_I1975</name>
</gene>
<accession>B0SSI7</accession>
<organism>
    <name type="scientific">Leptospira biflexa serovar Patoc (strain Patoc 1 / ATCC 23582 / Paris)</name>
    <dbReference type="NCBI Taxonomy" id="456481"/>
    <lineage>
        <taxon>Bacteria</taxon>
        <taxon>Pseudomonadati</taxon>
        <taxon>Spirochaetota</taxon>
        <taxon>Spirochaetia</taxon>
        <taxon>Leptospirales</taxon>
        <taxon>Leptospiraceae</taxon>
        <taxon>Leptospira</taxon>
    </lineage>
</organism>
<dbReference type="EMBL" id="CP000786">
    <property type="protein sequence ID" value="ABZ98077.1"/>
    <property type="molecule type" value="Genomic_DNA"/>
</dbReference>
<dbReference type="RefSeq" id="WP_012388948.1">
    <property type="nucleotide sequence ID" value="NC_010602.1"/>
</dbReference>
<dbReference type="SMR" id="B0SSI7"/>
<dbReference type="STRING" id="456481.LEPBI_I1975"/>
<dbReference type="KEGG" id="lbi:LEPBI_I1975"/>
<dbReference type="HOGENOM" id="CLU_062853_0_0_12"/>
<dbReference type="OrthoDB" id="9803740at2"/>
<dbReference type="BioCyc" id="LBIF456481:LEPBI_RS09755-MONOMER"/>
<dbReference type="Proteomes" id="UP000001847">
    <property type="component" value="Chromosome I"/>
</dbReference>
<dbReference type="GO" id="GO:0015934">
    <property type="term" value="C:large ribosomal subunit"/>
    <property type="evidence" value="ECO:0007669"/>
    <property type="project" value="InterPro"/>
</dbReference>
<dbReference type="GO" id="GO:0019843">
    <property type="term" value="F:rRNA binding"/>
    <property type="evidence" value="ECO:0007669"/>
    <property type="project" value="UniProtKB-UniRule"/>
</dbReference>
<dbReference type="GO" id="GO:0003735">
    <property type="term" value="F:structural constituent of ribosome"/>
    <property type="evidence" value="ECO:0007669"/>
    <property type="project" value="InterPro"/>
</dbReference>
<dbReference type="GO" id="GO:0000049">
    <property type="term" value="F:tRNA binding"/>
    <property type="evidence" value="ECO:0007669"/>
    <property type="project" value="UniProtKB-KW"/>
</dbReference>
<dbReference type="GO" id="GO:0006417">
    <property type="term" value="P:regulation of translation"/>
    <property type="evidence" value="ECO:0007669"/>
    <property type="project" value="UniProtKB-KW"/>
</dbReference>
<dbReference type="GO" id="GO:0006412">
    <property type="term" value="P:translation"/>
    <property type="evidence" value="ECO:0007669"/>
    <property type="project" value="UniProtKB-UniRule"/>
</dbReference>
<dbReference type="CDD" id="cd00403">
    <property type="entry name" value="Ribosomal_L1"/>
    <property type="match status" value="1"/>
</dbReference>
<dbReference type="FunFam" id="3.40.50.790:FF:000001">
    <property type="entry name" value="50S ribosomal protein L1"/>
    <property type="match status" value="1"/>
</dbReference>
<dbReference type="Gene3D" id="3.30.190.20">
    <property type="match status" value="1"/>
</dbReference>
<dbReference type="Gene3D" id="3.40.50.790">
    <property type="match status" value="1"/>
</dbReference>
<dbReference type="HAMAP" id="MF_01318_B">
    <property type="entry name" value="Ribosomal_uL1_B"/>
    <property type="match status" value="1"/>
</dbReference>
<dbReference type="InterPro" id="IPR005878">
    <property type="entry name" value="Ribosom_uL1_bac-type"/>
</dbReference>
<dbReference type="InterPro" id="IPR002143">
    <property type="entry name" value="Ribosomal_uL1"/>
</dbReference>
<dbReference type="InterPro" id="IPR023674">
    <property type="entry name" value="Ribosomal_uL1-like"/>
</dbReference>
<dbReference type="InterPro" id="IPR028364">
    <property type="entry name" value="Ribosomal_uL1/biogenesis"/>
</dbReference>
<dbReference type="InterPro" id="IPR016095">
    <property type="entry name" value="Ribosomal_uL1_3-a/b-sand"/>
</dbReference>
<dbReference type="InterPro" id="IPR023673">
    <property type="entry name" value="Ribosomal_uL1_CS"/>
</dbReference>
<dbReference type="NCBIfam" id="TIGR01169">
    <property type="entry name" value="rplA_bact"/>
    <property type="match status" value="1"/>
</dbReference>
<dbReference type="PANTHER" id="PTHR36427">
    <property type="entry name" value="54S RIBOSOMAL PROTEIN L1, MITOCHONDRIAL"/>
    <property type="match status" value="1"/>
</dbReference>
<dbReference type="PANTHER" id="PTHR36427:SF3">
    <property type="entry name" value="LARGE RIBOSOMAL SUBUNIT PROTEIN UL1M"/>
    <property type="match status" value="1"/>
</dbReference>
<dbReference type="Pfam" id="PF00687">
    <property type="entry name" value="Ribosomal_L1"/>
    <property type="match status" value="1"/>
</dbReference>
<dbReference type="PIRSF" id="PIRSF002155">
    <property type="entry name" value="Ribosomal_L1"/>
    <property type="match status" value="1"/>
</dbReference>
<dbReference type="SUPFAM" id="SSF56808">
    <property type="entry name" value="Ribosomal protein L1"/>
    <property type="match status" value="1"/>
</dbReference>
<dbReference type="PROSITE" id="PS01199">
    <property type="entry name" value="RIBOSOMAL_L1"/>
    <property type="match status" value="1"/>
</dbReference>
<keyword id="KW-1185">Reference proteome</keyword>
<keyword id="KW-0678">Repressor</keyword>
<keyword id="KW-0687">Ribonucleoprotein</keyword>
<keyword id="KW-0689">Ribosomal protein</keyword>
<keyword id="KW-0694">RNA-binding</keyword>
<keyword id="KW-0699">rRNA-binding</keyword>
<keyword id="KW-0810">Translation regulation</keyword>
<keyword id="KW-0820">tRNA-binding</keyword>
<proteinExistence type="inferred from homology"/>
<evidence type="ECO:0000255" key="1">
    <source>
        <dbReference type="HAMAP-Rule" id="MF_01318"/>
    </source>
</evidence>
<evidence type="ECO:0000305" key="2"/>
<comment type="function">
    <text evidence="1">Binds directly to 23S rRNA. The L1 stalk is quite mobile in the ribosome, and is involved in E site tRNA release.</text>
</comment>
<comment type="function">
    <text evidence="1">Protein L1 is also a translational repressor protein, it controls the translation of the L11 operon by binding to its mRNA.</text>
</comment>
<comment type="subunit">
    <text evidence="1">Part of the 50S ribosomal subunit.</text>
</comment>
<comment type="similarity">
    <text evidence="1">Belongs to the universal ribosomal protein uL1 family.</text>
</comment>